<feature type="chain" id="PRO_0000403250" description="Cyanate hydratase">
    <location>
        <begin position="1"/>
        <end position="183"/>
    </location>
</feature>
<feature type="active site" evidence="1">
    <location>
        <position position="118"/>
    </location>
</feature>
<feature type="active site" evidence="1">
    <location>
        <position position="121"/>
    </location>
</feature>
<feature type="active site" evidence="1">
    <location>
        <position position="144"/>
    </location>
</feature>
<comment type="function">
    <text evidence="1">Catalyzes the reaction of cyanate with bicarbonate to produce ammonia and carbon dioxide.</text>
</comment>
<comment type="catalytic activity">
    <reaction evidence="1">
        <text>cyanate + hydrogencarbonate + 3 H(+) = NH4(+) + 2 CO2</text>
        <dbReference type="Rhea" id="RHEA:11120"/>
        <dbReference type="ChEBI" id="CHEBI:15378"/>
        <dbReference type="ChEBI" id="CHEBI:16526"/>
        <dbReference type="ChEBI" id="CHEBI:17544"/>
        <dbReference type="ChEBI" id="CHEBI:28938"/>
        <dbReference type="ChEBI" id="CHEBI:29195"/>
        <dbReference type="EC" id="4.2.1.104"/>
    </reaction>
</comment>
<comment type="similarity">
    <text evidence="1">Belongs to the cyanase family.</text>
</comment>
<evidence type="ECO:0000255" key="1">
    <source>
        <dbReference type="HAMAP-Rule" id="MF_03139"/>
    </source>
</evidence>
<sequence>MFNLPYHCKALLTAKQERGLTFDDVAKAINKPEVWTTALFYGQASTDKSTAEAILKALGGEQFWTDYNDRLEAGQEKIDIRRVLNGLSGNGEENMGVKGMVTRGATFEVPPKDPVLYRLYEVLVVYGYSYKALIYEKFGDGIMSAIDFRTSLERKKDPKGDRVVITMDGKFLPYSDPSAWGTQ</sequence>
<reference key="1">
    <citation type="journal article" date="2005" name="Science">
        <title>The genome of the basidiomycetous yeast and human pathogen Cryptococcus neoformans.</title>
        <authorList>
            <person name="Loftus B.J."/>
            <person name="Fung E."/>
            <person name="Roncaglia P."/>
            <person name="Rowley D."/>
            <person name="Amedeo P."/>
            <person name="Bruno D."/>
            <person name="Vamathevan J."/>
            <person name="Miranda M."/>
            <person name="Anderson I.J."/>
            <person name="Fraser J.A."/>
            <person name="Allen J.E."/>
            <person name="Bosdet I.E."/>
            <person name="Brent M.R."/>
            <person name="Chiu R."/>
            <person name="Doering T.L."/>
            <person name="Donlin M.J."/>
            <person name="D'Souza C.A."/>
            <person name="Fox D.S."/>
            <person name="Grinberg V."/>
            <person name="Fu J."/>
            <person name="Fukushima M."/>
            <person name="Haas B.J."/>
            <person name="Huang J.C."/>
            <person name="Janbon G."/>
            <person name="Jones S.J.M."/>
            <person name="Koo H.L."/>
            <person name="Krzywinski M.I."/>
            <person name="Kwon-Chung K.J."/>
            <person name="Lengeler K.B."/>
            <person name="Maiti R."/>
            <person name="Marra M.A."/>
            <person name="Marra R.E."/>
            <person name="Mathewson C.A."/>
            <person name="Mitchell T.G."/>
            <person name="Pertea M."/>
            <person name="Riggs F.R."/>
            <person name="Salzberg S.L."/>
            <person name="Schein J.E."/>
            <person name="Shvartsbeyn A."/>
            <person name="Shin H."/>
            <person name="Shumway M."/>
            <person name="Specht C.A."/>
            <person name="Suh B.B."/>
            <person name="Tenney A."/>
            <person name="Utterback T.R."/>
            <person name="Wickes B.L."/>
            <person name="Wortman J.R."/>
            <person name="Wye N.H."/>
            <person name="Kronstad J.W."/>
            <person name="Lodge J.K."/>
            <person name="Heitman J."/>
            <person name="Davis R.W."/>
            <person name="Fraser C.M."/>
            <person name="Hyman R.W."/>
        </authorList>
    </citation>
    <scope>NUCLEOTIDE SEQUENCE [LARGE SCALE GENOMIC DNA]</scope>
    <source>
        <strain>JEC21 / ATCC MYA-565</strain>
    </source>
</reference>
<organism>
    <name type="scientific">Cryptococcus neoformans var. neoformans serotype D (strain JEC21 / ATCC MYA-565)</name>
    <name type="common">Filobasidiella neoformans</name>
    <dbReference type="NCBI Taxonomy" id="214684"/>
    <lineage>
        <taxon>Eukaryota</taxon>
        <taxon>Fungi</taxon>
        <taxon>Dikarya</taxon>
        <taxon>Basidiomycota</taxon>
        <taxon>Agaricomycotina</taxon>
        <taxon>Tremellomycetes</taxon>
        <taxon>Tremellales</taxon>
        <taxon>Cryptococcaceae</taxon>
        <taxon>Cryptococcus</taxon>
        <taxon>Cryptococcus neoformans species complex</taxon>
    </lineage>
</organism>
<gene>
    <name evidence="1" type="primary">CYN1</name>
    <name type="ordered locus">CND04630</name>
</gene>
<keyword id="KW-0456">Lyase</keyword>
<keyword id="KW-1185">Reference proteome</keyword>
<proteinExistence type="inferred from homology"/>
<accession>P0CN02</accession>
<accession>Q55UD8</accession>
<accession>Q5KI07</accession>
<name>CYNS_CRYNJ</name>
<dbReference type="EC" id="4.2.1.104" evidence="1"/>
<dbReference type="EMBL" id="AE017344">
    <property type="protein sequence ID" value="AAW43296.1"/>
    <property type="molecule type" value="Genomic_DNA"/>
</dbReference>
<dbReference type="RefSeq" id="XP_570603.1">
    <property type="nucleotide sequence ID" value="XM_570603.1"/>
</dbReference>
<dbReference type="SMR" id="P0CN02"/>
<dbReference type="STRING" id="214684.P0CN02"/>
<dbReference type="PaxDb" id="214684-P0CN02"/>
<dbReference type="EnsemblFungi" id="AAW43296">
    <property type="protein sequence ID" value="AAW43296"/>
    <property type="gene ID" value="CND04630"/>
</dbReference>
<dbReference type="VEuPathDB" id="FungiDB:CND04630"/>
<dbReference type="eggNOG" id="ENOG502S3YJ">
    <property type="taxonomic scope" value="Eukaryota"/>
</dbReference>
<dbReference type="HOGENOM" id="CLU_103452_1_0_1"/>
<dbReference type="InParanoid" id="P0CN02"/>
<dbReference type="OMA" id="YELVMIN"/>
<dbReference type="OrthoDB" id="10019422at2759"/>
<dbReference type="Proteomes" id="UP000002149">
    <property type="component" value="Chromosome 4"/>
</dbReference>
<dbReference type="GO" id="GO:0008824">
    <property type="term" value="F:cyanate hydratase activity"/>
    <property type="evidence" value="ECO:0007669"/>
    <property type="project" value="UniProtKB-UniRule"/>
</dbReference>
<dbReference type="GO" id="GO:0003677">
    <property type="term" value="F:DNA binding"/>
    <property type="evidence" value="ECO:0007669"/>
    <property type="project" value="InterPro"/>
</dbReference>
<dbReference type="GO" id="GO:0009439">
    <property type="term" value="P:cyanate metabolic process"/>
    <property type="evidence" value="ECO:0007669"/>
    <property type="project" value="UniProtKB-UniRule"/>
</dbReference>
<dbReference type="CDD" id="cd00559">
    <property type="entry name" value="Cyanase_C"/>
    <property type="match status" value="1"/>
</dbReference>
<dbReference type="Gene3D" id="3.30.1160.10">
    <property type="entry name" value="Cyanate lyase, C-terminal domain"/>
    <property type="match status" value="1"/>
</dbReference>
<dbReference type="Gene3D" id="1.10.260.40">
    <property type="entry name" value="lambda repressor-like DNA-binding domains"/>
    <property type="match status" value="1"/>
</dbReference>
<dbReference type="HAMAP" id="MF_00535">
    <property type="entry name" value="Cyanate_hydrat"/>
    <property type="match status" value="1"/>
</dbReference>
<dbReference type="InterPro" id="IPR008076">
    <property type="entry name" value="Cyanase"/>
</dbReference>
<dbReference type="InterPro" id="IPR003712">
    <property type="entry name" value="Cyanate_lyase_C"/>
</dbReference>
<dbReference type="InterPro" id="IPR036581">
    <property type="entry name" value="Cyanate_lyase_C_sf"/>
</dbReference>
<dbReference type="InterPro" id="IPR048564">
    <property type="entry name" value="CYNS_N"/>
</dbReference>
<dbReference type="InterPro" id="IPR010982">
    <property type="entry name" value="Lambda_DNA-bd_dom_sf"/>
</dbReference>
<dbReference type="PANTHER" id="PTHR34186">
    <property type="entry name" value="CYANATE HYDRATASE"/>
    <property type="match status" value="1"/>
</dbReference>
<dbReference type="PANTHER" id="PTHR34186:SF2">
    <property type="entry name" value="CYANATE HYDRATASE"/>
    <property type="match status" value="1"/>
</dbReference>
<dbReference type="Pfam" id="PF02560">
    <property type="entry name" value="Cyanate_lyase"/>
    <property type="match status" value="1"/>
</dbReference>
<dbReference type="Pfam" id="PF21291">
    <property type="entry name" value="CYNS_N"/>
    <property type="match status" value="1"/>
</dbReference>
<dbReference type="PIRSF" id="PIRSF001263">
    <property type="entry name" value="Cyanate_hydratas"/>
    <property type="match status" value="1"/>
</dbReference>
<dbReference type="PRINTS" id="PR01693">
    <property type="entry name" value="CYANASE"/>
</dbReference>
<dbReference type="SMART" id="SM01116">
    <property type="entry name" value="Cyanate_lyase"/>
    <property type="match status" value="1"/>
</dbReference>
<dbReference type="SUPFAM" id="SSF55234">
    <property type="entry name" value="Cyanase C-terminal domain"/>
    <property type="match status" value="1"/>
</dbReference>
<dbReference type="SUPFAM" id="SSF47413">
    <property type="entry name" value="lambda repressor-like DNA-binding domains"/>
    <property type="match status" value="1"/>
</dbReference>
<protein>
    <recommendedName>
        <fullName evidence="1">Cyanate hydratase</fullName>
        <shortName evidence="1">Cyanase</shortName>
        <ecNumber evidence="1">4.2.1.104</ecNumber>
    </recommendedName>
    <alternativeName>
        <fullName evidence="1">Cyanate hydrolase</fullName>
    </alternativeName>
    <alternativeName>
        <fullName evidence="1">Cyanate lyase</fullName>
    </alternativeName>
</protein>